<name>SELO_PSEU2</name>
<protein>
    <recommendedName>
        <fullName evidence="1">Protein nucleotidyltransferase YdiU</fullName>
        <ecNumber evidence="1">2.7.7.-</ecNumber>
    </recommendedName>
    <alternativeName>
        <fullName evidence="1">Protein adenylyltransferase YdiU</fullName>
        <ecNumber evidence="1">2.7.7.108</ecNumber>
    </alternativeName>
    <alternativeName>
        <fullName evidence="1">Protein uridylyltransferase YdiU</fullName>
        <ecNumber evidence="1">2.7.7.-</ecNumber>
    </alternativeName>
</protein>
<comment type="function">
    <text evidence="1">Nucleotidyltransferase involved in the post-translational modification of proteins. It can catalyze the addition of adenosine monophosphate (AMP) or uridine monophosphate (UMP) to a protein, resulting in modifications known as AMPylation and UMPylation.</text>
</comment>
<comment type="catalytic activity">
    <reaction evidence="1">
        <text>L-seryl-[protein] + ATP = 3-O-(5'-adenylyl)-L-seryl-[protein] + diphosphate</text>
        <dbReference type="Rhea" id="RHEA:58120"/>
        <dbReference type="Rhea" id="RHEA-COMP:9863"/>
        <dbReference type="Rhea" id="RHEA-COMP:15073"/>
        <dbReference type="ChEBI" id="CHEBI:29999"/>
        <dbReference type="ChEBI" id="CHEBI:30616"/>
        <dbReference type="ChEBI" id="CHEBI:33019"/>
        <dbReference type="ChEBI" id="CHEBI:142516"/>
        <dbReference type="EC" id="2.7.7.108"/>
    </reaction>
</comment>
<comment type="catalytic activity">
    <reaction evidence="1">
        <text>L-threonyl-[protein] + ATP = 3-O-(5'-adenylyl)-L-threonyl-[protein] + diphosphate</text>
        <dbReference type="Rhea" id="RHEA:54292"/>
        <dbReference type="Rhea" id="RHEA-COMP:11060"/>
        <dbReference type="Rhea" id="RHEA-COMP:13847"/>
        <dbReference type="ChEBI" id="CHEBI:30013"/>
        <dbReference type="ChEBI" id="CHEBI:30616"/>
        <dbReference type="ChEBI" id="CHEBI:33019"/>
        <dbReference type="ChEBI" id="CHEBI:138113"/>
        <dbReference type="EC" id="2.7.7.108"/>
    </reaction>
</comment>
<comment type="catalytic activity">
    <reaction evidence="1">
        <text>L-tyrosyl-[protein] + ATP = O-(5'-adenylyl)-L-tyrosyl-[protein] + diphosphate</text>
        <dbReference type="Rhea" id="RHEA:54288"/>
        <dbReference type="Rhea" id="RHEA-COMP:10136"/>
        <dbReference type="Rhea" id="RHEA-COMP:13846"/>
        <dbReference type="ChEBI" id="CHEBI:30616"/>
        <dbReference type="ChEBI" id="CHEBI:33019"/>
        <dbReference type="ChEBI" id="CHEBI:46858"/>
        <dbReference type="ChEBI" id="CHEBI:83624"/>
        <dbReference type="EC" id="2.7.7.108"/>
    </reaction>
</comment>
<comment type="catalytic activity">
    <reaction evidence="1">
        <text>L-histidyl-[protein] + UTP = N(tele)-(5'-uridylyl)-L-histidyl-[protein] + diphosphate</text>
        <dbReference type="Rhea" id="RHEA:83891"/>
        <dbReference type="Rhea" id="RHEA-COMP:9745"/>
        <dbReference type="Rhea" id="RHEA-COMP:20239"/>
        <dbReference type="ChEBI" id="CHEBI:29979"/>
        <dbReference type="ChEBI" id="CHEBI:33019"/>
        <dbReference type="ChEBI" id="CHEBI:46398"/>
        <dbReference type="ChEBI" id="CHEBI:233474"/>
    </reaction>
</comment>
<comment type="catalytic activity">
    <reaction evidence="1">
        <text>L-seryl-[protein] + UTP = O-(5'-uridylyl)-L-seryl-[protein] + diphosphate</text>
        <dbReference type="Rhea" id="RHEA:64604"/>
        <dbReference type="Rhea" id="RHEA-COMP:9863"/>
        <dbReference type="Rhea" id="RHEA-COMP:16635"/>
        <dbReference type="ChEBI" id="CHEBI:29999"/>
        <dbReference type="ChEBI" id="CHEBI:33019"/>
        <dbReference type="ChEBI" id="CHEBI:46398"/>
        <dbReference type="ChEBI" id="CHEBI:156051"/>
    </reaction>
</comment>
<comment type="catalytic activity">
    <reaction evidence="1">
        <text>L-tyrosyl-[protein] + UTP = O-(5'-uridylyl)-L-tyrosyl-[protein] + diphosphate</text>
        <dbReference type="Rhea" id="RHEA:83887"/>
        <dbReference type="Rhea" id="RHEA-COMP:10136"/>
        <dbReference type="Rhea" id="RHEA-COMP:20238"/>
        <dbReference type="ChEBI" id="CHEBI:33019"/>
        <dbReference type="ChEBI" id="CHEBI:46398"/>
        <dbReference type="ChEBI" id="CHEBI:46858"/>
        <dbReference type="ChEBI" id="CHEBI:90602"/>
    </reaction>
</comment>
<comment type="cofactor">
    <cofactor evidence="1">
        <name>Mg(2+)</name>
        <dbReference type="ChEBI" id="CHEBI:18420"/>
    </cofactor>
    <cofactor evidence="1">
        <name>Mn(2+)</name>
        <dbReference type="ChEBI" id="CHEBI:29035"/>
    </cofactor>
</comment>
<comment type="similarity">
    <text evidence="1">Belongs to the SELO family.</text>
</comment>
<evidence type="ECO:0000255" key="1">
    <source>
        <dbReference type="HAMAP-Rule" id="MF_00692"/>
    </source>
</evidence>
<keyword id="KW-0067">ATP-binding</keyword>
<keyword id="KW-0460">Magnesium</keyword>
<keyword id="KW-0464">Manganese</keyword>
<keyword id="KW-0479">Metal-binding</keyword>
<keyword id="KW-0547">Nucleotide-binding</keyword>
<keyword id="KW-0548">Nucleotidyltransferase</keyword>
<keyword id="KW-0808">Transferase</keyword>
<organism>
    <name type="scientific">Pseudomonas syringae pv. syringae (strain B728a)</name>
    <dbReference type="NCBI Taxonomy" id="205918"/>
    <lineage>
        <taxon>Bacteria</taxon>
        <taxon>Pseudomonadati</taxon>
        <taxon>Pseudomonadota</taxon>
        <taxon>Gammaproteobacteria</taxon>
        <taxon>Pseudomonadales</taxon>
        <taxon>Pseudomonadaceae</taxon>
        <taxon>Pseudomonas</taxon>
        <taxon>Pseudomonas syringae</taxon>
    </lineage>
</organism>
<reference key="1">
    <citation type="journal article" date="2005" name="Proc. Natl. Acad. Sci. U.S.A.">
        <title>Comparison of the complete genome sequences of Pseudomonas syringae pv. syringae B728a and pv. tomato DC3000.</title>
        <authorList>
            <person name="Feil H."/>
            <person name="Feil W.S."/>
            <person name="Chain P."/>
            <person name="Larimer F."/>
            <person name="Dibartolo G."/>
            <person name="Copeland A."/>
            <person name="Lykidis A."/>
            <person name="Trong S."/>
            <person name="Nolan M."/>
            <person name="Goltsman E."/>
            <person name="Thiel J."/>
            <person name="Malfatti S."/>
            <person name="Loper J.E."/>
            <person name="Lapidus A."/>
            <person name="Detter J.C."/>
            <person name="Land M."/>
            <person name="Richardson P.M."/>
            <person name="Kyrpides N.C."/>
            <person name="Ivanova N."/>
            <person name="Lindow S.E."/>
        </authorList>
    </citation>
    <scope>NUCLEOTIDE SEQUENCE [LARGE SCALE GENOMIC DNA]</scope>
    <source>
        <strain>B728a</strain>
    </source>
</reference>
<gene>
    <name evidence="1" type="primary">ydiU</name>
    <name evidence="1" type="synonym">selO</name>
    <name type="ordered locus">Psyr_0494</name>
</gene>
<sequence>MKALDELIFDNRFARLGDAFSTSVLPEPIDAPQLVVASQSALALLDLAPEQADLPLFAEIFSGHKLWSEAEPRAMVYSGHQFGSYNPRLGDGRGLLLGEVYNDAGEHWDLHLKGAGRTPYSRMGDGRAVLRSSIREFLASEVLHALGIPSSRAGCVVSSSTPVWRETQEHAAMVLRLAQSHVRFGSLEYFFYTKQPEQLKTLAEHVLTMHYPHCQEQPEPYLAMFREIVERNAELIAKWQAYGFCHGVMNTDNMSILGITFDFGPFAFLDDFDEHFICNHSDHEGRYSFSNQVPIAQWNLSALAQALTPFISVDALREAIGLFLPLYQAHYLDLMRRRLGLTVAHEQDEQLVSQLLKLMQNSGVDYTLFFRRLGDQPAAEALRTLRDDFVDIKGFDGWAQAYQARIALENNGTEQERQTRMHAVNPLYILRNYLAQNAIAAAEKGDYAEVRRLHQVLCTPFTEQPGMQGYAQRPPDWGKHLEISCSS</sequence>
<proteinExistence type="inferred from homology"/>
<dbReference type="EC" id="2.7.7.-" evidence="1"/>
<dbReference type="EC" id="2.7.7.108" evidence="1"/>
<dbReference type="EMBL" id="CP000075">
    <property type="protein sequence ID" value="AAY35564.1"/>
    <property type="molecule type" value="Genomic_DNA"/>
</dbReference>
<dbReference type="RefSeq" id="WP_011266437.1">
    <property type="nucleotide sequence ID" value="NC_007005.1"/>
</dbReference>
<dbReference type="RefSeq" id="YP_233602.1">
    <property type="nucleotide sequence ID" value="NC_007005.1"/>
</dbReference>
<dbReference type="SMR" id="Q4ZZ58"/>
<dbReference type="STRING" id="205918.Psyr_0494"/>
<dbReference type="KEGG" id="psb:Psyr_0494"/>
<dbReference type="PATRIC" id="fig|205918.7.peg.513"/>
<dbReference type="eggNOG" id="COG0397">
    <property type="taxonomic scope" value="Bacteria"/>
</dbReference>
<dbReference type="HOGENOM" id="CLU_010245_4_0_6"/>
<dbReference type="OrthoDB" id="9776281at2"/>
<dbReference type="Proteomes" id="UP000000426">
    <property type="component" value="Chromosome"/>
</dbReference>
<dbReference type="GO" id="GO:0070733">
    <property type="term" value="F:AMPylase activity"/>
    <property type="evidence" value="ECO:0007669"/>
    <property type="project" value="RHEA"/>
</dbReference>
<dbReference type="GO" id="GO:0005524">
    <property type="term" value="F:ATP binding"/>
    <property type="evidence" value="ECO:0007669"/>
    <property type="project" value="UniProtKB-UniRule"/>
</dbReference>
<dbReference type="GO" id="GO:0000287">
    <property type="term" value="F:magnesium ion binding"/>
    <property type="evidence" value="ECO:0007669"/>
    <property type="project" value="UniProtKB-UniRule"/>
</dbReference>
<dbReference type="HAMAP" id="MF_00692">
    <property type="entry name" value="YdiU_SelO"/>
    <property type="match status" value="1"/>
</dbReference>
<dbReference type="InterPro" id="IPR003846">
    <property type="entry name" value="SelO"/>
</dbReference>
<dbReference type="NCBIfam" id="NF000658">
    <property type="entry name" value="PRK00029.1"/>
    <property type="match status" value="1"/>
</dbReference>
<dbReference type="NCBIfam" id="NF045949">
    <property type="entry name" value="PrtAdtaseSelOPseudom"/>
    <property type="match status" value="1"/>
</dbReference>
<dbReference type="PANTHER" id="PTHR32057">
    <property type="entry name" value="PROTEIN ADENYLYLTRANSFERASE SELO, MITOCHONDRIAL"/>
    <property type="match status" value="1"/>
</dbReference>
<dbReference type="PANTHER" id="PTHR32057:SF14">
    <property type="entry name" value="PROTEIN ADENYLYLTRANSFERASE SELO, MITOCHONDRIAL"/>
    <property type="match status" value="1"/>
</dbReference>
<dbReference type="Pfam" id="PF02696">
    <property type="entry name" value="SelO"/>
    <property type="match status" value="1"/>
</dbReference>
<feature type="chain" id="PRO_0000271849" description="Protein nucleotidyltransferase YdiU">
    <location>
        <begin position="1"/>
        <end position="487"/>
    </location>
</feature>
<feature type="active site" description="Proton acceptor" evidence="1">
    <location>
        <position position="252"/>
    </location>
</feature>
<feature type="binding site" evidence="1">
    <location>
        <position position="90"/>
    </location>
    <ligand>
        <name>ATP</name>
        <dbReference type="ChEBI" id="CHEBI:30616"/>
    </ligand>
</feature>
<feature type="binding site" evidence="1">
    <location>
        <position position="92"/>
    </location>
    <ligand>
        <name>ATP</name>
        <dbReference type="ChEBI" id="CHEBI:30616"/>
    </ligand>
</feature>
<feature type="binding site" evidence="1">
    <location>
        <position position="93"/>
    </location>
    <ligand>
        <name>ATP</name>
        <dbReference type="ChEBI" id="CHEBI:30616"/>
    </ligand>
</feature>
<feature type="binding site" evidence="1">
    <location>
        <position position="113"/>
    </location>
    <ligand>
        <name>ATP</name>
        <dbReference type="ChEBI" id="CHEBI:30616"/>
    </ligand>
</feature>
<feature type="binding site" evidence="1">
    <location>
        <position position="125"/>
    </location>
    <ligand>
        <name>ATP</name>
        <dbReference type="ChEBI" id="CHEBI:30616"/>
    </ligand>
</feature>
<feature type="binding site" evidence="1">
    <location>
        <position position="126"/>
    </location>
    <ligand>
        <name>ATP</name>
        <dbReference type="ChEBI" id="CHEBI:30616"/>
    </ligand>
</feature>
<feature type="binding site" evidence="1">
    <location>
        <position position="176"/>
    </location>
    <ligand>
        <name>ATP</name>
        <dbReference type="ChEBI" id="CHEBI:30616"/>
    </ligand>
</feature>
<feature type="binding site" evidence="1">
    <location>
        <position position="183"/>
    </location>
    <ligand>
        <name>ATP</name>
        <dbReference type="ChEBI" id="CHEBI:30616"/>
    </ligand>
</feature>
<feature type="binding site" evidence="1">
    <location>
        <position position="253"/>
    </location>
    <ligand>
        <name>Mg(2+)</name>
        <dbReference type="ChEBI" id="CHEBI:18420"/>
    </ligand>
</feature>
<feature type="binding site" evidence="1">
    <location>
        <position position="262"/>
    </location>
    <ligand>
        <name>ATP</name>
        <dbReference type="ChEBI" id="CHEBI:30616"/>
    </ligand>
</feature>
<feature type="binding site" evidence="1">
    <location>
        <position position="262"/>
    </location>
    <ligand>
        <name>Mg(2+)</name>
        <dbReference type="ChEBI" id="CHEBI:18420"/>
    </ligand>
</feature>
<accession>Q4ZZ58</accession>